<organism>
    <name type="scientific">Prochlorococcus marinus (strain AS9601)</name>
    <dbReference type="NCBI Taxonomy" id="146891"/>
    <lineage>
        <taxon>Bacteria</taxon>
        <taxon>Bacillati</taxon>
        <taxon>Cyanobacteriota</taxon>
        <taxon>Cyanophyceae</taxon>
        <taxon>Synechococcales</taxon>
        <taxon>Prochlorococcaceae</taxon>
        <taxon>Prochlorococcus</taxon>
    </lineage>
</organism>
<name>PSBN_PROMS</name>
<protein>
    <recommendedName>
        <fullName evidence="1">Protein PsbN</fullName>
    </recommendedName>
</protein>
<accession>A2BP51</accession>
<keyword id="KW-0472">Membrane</keyword>
<keyword id="KW-0793">Thylakoid</keyword>
<keyword id="KW-0812">Transmembrane</keyword>
<keyword id="KW-1133">Transmembrane helix</keyword>
<reference key="1">
    <citation type="journal article" date="2007" name="PLoS Genet.">
        <title>Patterns and implications of gene gain and loss in the evolution of Prochlorococcus.</title>
        <authorList>
            <person name="Kettler G.C."/>
            <person name="Martiny A.C."/>
            <person name="Huang K."/>
            <person name="Zucker J."/>
            <person name="Coleman M.L."/>
            <person name="Rodrigue S."/>
            <person name="Chen F."/>
            <person name="Lapidus A."/>
            <person name="Ferriera S."/>
            <person name="Johnson J."/>
            <person name="Steglich C."/>
            <person name="Church G.M."/>
            <person name="Richardson P."/>
            <person name="Chisholm S.W."/>
        </authorList>
    </citation>
    <scope>NUCLEOTIDE SEQUENCE [LARGE SCALE GENOMIC DNA]</scope>
    <source>
        <strain>AS9601</strain>
    </source>
</reference>
<feature type="chain" id="PRO_1000004128" description="Protein PsbN">
    <location>
        <begin position="1"/>
        <end position="50"/>
    </location>
</feature>
<feature type="transmembrane region" description="Helical" evidence="1">
    <location>
        <begin position="14"/>
        <end position="34"/>
    </location>
</feature>
<proteinExistence type="inferred from homology"/>
<comment type="function">
    <text evidence="1">May play a role in photosystem I and II biogenesis.</text>
</comment>
<comment type="subcellular location">
    <subcellularLocation>
        <location evidence="1">Cellular thylakoid membrane</location>
        <topology evidence="1">Single-pass membrane protein</topology>
    </subcellularLocation>
</comment>
<comment type="similarity">
    <text evidence="1">Belongs to the PsbN family.</text>
</comment>
<comment type="caution">
    <text evidence="1">Originally thought to be a component of PSII; based on experiments in Synechocystis, N.tabacum and barley, and its absence from PSII in T.elongatus and T.vulcanus, this is probably not true.</text>
</comment>
<gene>
    <name evidence="1" type="primary">psbN</name>
    <name type="ordered locus">A9601_02741</name>
</gene>
<dbReference type="EMBL" id="CP000551">
    <property type="protein sequence ID" value="ABM69562.1"/>
    <property type="molecule type" value="Genomic_DNA"/>
</dbReference>
<dbReference type="RefSeq" id="WP_011817745.1">
    <property type="nucleotide sequence ID" value="NC_008816.1"/>
</dbReference>
<dbReference type="SMR" id="A2BP51"/>
<dbReference type="STRING" id="146891.A9601_02741"/>
<dbReference type="KEGG" id="pmb:A9601_02741"/>
<dbReference type="HOGENOM" id="CLU_205504_1_0_3"/>
<dbReference type="Proteomes" id="UP000002590">
    <property type="component" value="Chromosome"/>
</dbReference>
<dbReference type="GO" id="GO:0031676">
    <property type="term" value="C:plasma membrane-derived thylakoid membrane"/>
    <property type="evidence" value="ECO:0007669"/>
    <property type="project" value="UniProtKB-SubCell"/>
</dbReference>
<dbReference type="GO" id="GO:0015979">
    <property type="term" value="P:photosynthesis"/>
    <property type="evidence" value="ECO:0007669"/>
    <property type="project" value="InterPro"/>
</dbReference>
<dbReference type="HAMAP" id="MF_00293">
    <property type="entry name" value="PSII_PsbN"/>
    <property type="match status" value="1"/>
</dbReference>
<dbReference type="InterPro" id="IPR003398">
    <property type="entry name" value="PSII_PsbN"/>
</dbReference>
<dbReference type="NCBIfam" id="NF009650">
    <property type="entry name" value="PRK13183.1"/>
    <property type="match status" value="1"/>
</dbReference>
<dbReference type="Pfam" id="PF02468">
    <property type="entry name" value="PsbN"/>
    <property type="match status" value="1"/>
</dbReference>
<sequence>MQTLSSAPDPAVSIAVTILALLLALTGFGLWTAFGPKAAKLTDPWDDHDD</sequence>
<evidence type="ECO:0000255" key="1">
    <source>
        <dbReference type="HAMAP-Rule" id="MF_00293"/>
    </source>
</evidence>